<name>ARP6_ORYSI</name>
<keyword id="KW-0156">Chromatin regulator</keyword>
<keyword id="KW-0217">Developmental protein</keyword>
<keyword id="KW-0539">Nucleus</keyword>
<keyword id="KW-0611">Plant defense</keyword>
<keyword id="KW-1185">Reference proteome</keyword>
<comment type="function">
    <text evidence="1">Component of the SWR1 complex which mediates the ATP-dependent exchange of histone H2A for the H2A variant H2A.F/Z leading to transcriptional regulation of selected genes by chromatin remodeling. Involved in several developmental processes. May be involved in the regulation of pathogenesis-related proteins (PRs) (By similarity).</text>
</comment>
<comment type="subunit">
    <text evidence="1">Component of the SWR1 chromatin-remodeling complex.</text>
</comment>
<comment type="subcellular location">
    <subcellularLocation>
        <location evidence="2">Nucleus</location>
    </subcellularLocation>
</comment>
<comment type="similarity">
    <text evidence="4">Belongs to the actin family. ARP6 subfamily.</text>
</comment>
<sequence>MTGGSGVVVLDNGGGLLKAGFGGDMNPTAVVPNCMAKPPGSKKWLVADQLQAQDVDVTGMTLRRPIDRGYLINQEVQREVWERVIRNLLQVDPNNSSLLLVEPQFNPPALQHATDELVFEELGFKSLCVADAPSLVHLYEASRQPSLFRAQCSLVVDCGFSFTHASPVLQNFTLNYAVRRMDLGGKALTNYLKELISYRSLNVMDETLLIDDAKEKLCFVSLDVPGDLRLARLSSNDNPFRCSYILPDGITYKKGFVKDLDEACRYSSLPANGESVRKDSSDSDRSKFEDKKKPELSQNEFVLTNERFLVPEMLFHPIDLGMNQAGLAECIVRAIQACHPHLQPVLFERIILTGGSTLFPRFTERLEKELRPLVPDDYQVKIIAQEDPILGAWRGGSLLAHRPDFESMCITKSEYEEMGSMRCRRRFFH</sequence>
<accession>A2WNB0</accession>
<protein>
    <recommendedName>
        <fullName>Actin-related protein 6</fullName>
    </recommendedName>
</protein>
<proteinExistence type="inferred from homology"/>
<dbReference type="EMBL" id="CM000126">
    <property type="protein sequence ID" value="EAY73456.1"/>
    <property type="molecule type" value="Genomic_DNA"/>
</dbReference>
<dbReference type="SMR" id="A2WNB0"/>
<dbReference type="STRING" id="39946.A2WNB0"/>
<dbReference type="EnsemblPlants" id="BGIOSGA001919-TA">
    <property type="protein sequence ID" value="BGIOSGA001919-PA"/>
    <property type="gene ID" value="BGIOSGA001919"/>
</dbReference>
<dbReference type="EnsemblPlants" id="OsKYG_01g0011550.01">
    <property type="protein sequence ID" value="OsKYG_01g0011550.01"/>
    <property type="gene ID" value="OsKYG_01g0011550"/>
</dbReference>
<dbReference type="EnsemblPlants" id="OsKYG_01g0011550.02">
    <property type="protein sequence ID" value="OsKYG_01g0011550.02"/>
    <property type="gene ID" value="OsKYG_01g0011550"/>
</dbReference>
<dbReference type="EnsemblPlants" id="OsKYG_01g0011550.03">
    <property type="protein sequence ID" value="OsKYG_01g0011550.03"/>
    <property type="gene ID" value="OsKYG_01g0011550"/>
</dbReference>
<dbReference type="EnsemblPlants" id="OsMH63_01G011830_01">
    <property type="protein sequence ID" value="OsMH63_01G011830_01"/>
    <property type="gene ID" value="OsMH63_01G011830"/>
</dbReference>
<dbReference type="EnsemblPlants" id="OsMH63_01G011830_02">
    <property type="protein sequence ID" value="OsMH63_01G011830_02"/>
    <property type="gene ID" value="OsMH63_01G011830"/>
</dbReference>
<dbReference type="EnsemblPlants" id="OsMH63_01G011830_03">
    <property type="protein sequence ID" value="OsMH63_01G011830_03"/>
    <property type="gene ID" value="OsMH63_01G011830"/>
</dbReference>
<dbReference type="EnsemblPlants" id="OsMH63_01G011830_05">
    <property type="protein sequence ID" value="OsMH63_01G011830_05"/>
    <property type="gene ID" value="OsMH63_01G011830"/>
</dbReference>
<dbReference type="EnsemblPlants" id="OsPr106_01g0011520.01">
    <property type="protein sequence ID" value="OsPr106_01g0011520.01"/>
    <property type="gene ID" value="OsPr106_01g0011520"/>
</dbReference>
<dbReference type="EnsemblPlants" id="OsPr106_01g0011520.02">
    <property type="protein sequence ID" value="OsPr106_01g0011520.02"/>
    <property type="gene ID" value="OsPr106_01g0011520"/>
</dbReference>
<dbReference type="EnsemblPlants" id="OsPr106_01g0011520.03">
    <property type="protein sequence ID" value="OsPr106_01g0011520.03"/>
    <property type="gene ID" value="OsPr106_01g0011520"/>
</dbReference>
<dbReference type="Gramene" id="BGIOSGA001919-TA">
    <property type="protein sequence ID" value="BGIOSGA001919-PA"/>
    <property type="gene ID" value="BGIOSGA001919"/>
</dbReference>
<dbReference type="Gramene" id="OsKYG_01g0011550.01">
    <property type="protein sequence ID" value="OsKYG_01g0011550.01"/>
    <property type="gene ID" value="OsKYG_01g0011550"/>
</dbReference>
<dbReference type="Gramene" id="OsKYG_01g0011550.02">
    <property type="protein sequence ID" value="OsKYG_01g0011550.02"/>
    <property type="gene ID" value="OsKYG_01g0011550"/>
</dbReference>
<dbReference type="Gramene" id="OsKYG_01g0011550.03">
    <property type="protein sequence ID" value="OsKYG_01g0011550.03"/>
    <property type="gene ID" value="OsKYG_01g0011550"/>
</dbReference>
<dbReference type="Gramene" id="OsMH63_01G011830_01">
    <property type="protein sequence ID" value="OsMH63_01G011830_01"/>
    <property type="gene ID" value="OsMH63_01G011830"/>
</dbReference>
<dbReference type="Gramene" id="OsMH63_01G011830_02">
    <property type="protein sequence ID" value="OsMH63_01G011830_02"/>
    <property type="gene ID" value="OsMH63_01G011830"/>
</dbReference>
<dbReference type="Gramene" id="OsMH63_01G011830_03">
    <property type="protein sequence ID" value="OsMH63_01G011830_03"/>
    <property type="gene ID" value="OsMH63_01G011830"/>
</dbReference>
<dbReference type="Gramene" id="OsMH63_01G011830_05">
    <property type="protein sequence ID" value="OsMH63_01G011830_05"/>
    <property type="gene ID" value="OsMH63_01G011830"/>
</dbReference>
<dbReference type="Gramene" id="OsPr106_01g0011520.01">
    <property type="protein sequence ID" value="OsPr106_01g0011520.01"/>
    <property type="gene ID" value="OsPr106_01g0011520"/>
</dbReference>
<dbReference type="Gramene" id="OsPr106_01g0011520.02">
    <property type="protein sequence ID" value="OsPr106_01g0011520.02"/>
    <property type="gene ID" value="OsPr106_01g0011520"/>
</dbReference>
<dbReference type="Gramene" id="OsPr106_01g0011520.03">
    <property type="protein sequence ID" value="OsPr106_01g0011520.03"/>
    <property type="gene ID" value="OsPr106_01g0011520"/>
</dbReference>
<dbReference type="HOGENOM" id="CLU_027965_1_1_1"/>
<dbReference type="OMA" id="FFEEYEC"/>
<dbReference type="Proteomes" id="UP000007015">
    <property type="component" value="Chromosome 1"/>
</dbReference>
<dbReference type="GO" id="GO:0000812">
    <property type="term" value="C:Swr1 complex"/>
    <property type="evidence" value="ECO:0007669"/>
    <property type="project" value="EnsemblPlants"/>
</dbReference>
<dbReference type="GO" id="GO:0051301">
    <property type="term" value="P:cell division"/>
    <property type="evidence" value="ECO:0007669"/>
    <property type="project" value="EnsemblPlants"/>
</dbReference>
<dbReference type="GO" id="GO:0006338">
    <property type="term" value="P:chromatin remodeling"/>
    <property type="evidence" value="ECO:0007669"/>
    <property type="project" value="EnsemblPlants"/>
</dbReference>
<dbReference type="GO" id="GO:0006952">
    <property type="term" value="P:defense response"/>
    <property type="evidence" value="ECO:0007669"/>
    <property type="project" value="UniProtKB-KW"/>
</dbReference>
<dbReference type="GO" id="GO:0009910">
    <property type="term" value="P:negative regulation of flower development"/>
    <property type="evidence" value="ECO:0007669"/>
    <property type="project" value="EnsemblPlants"/>
</dbReference>
<dbReference type="GO" id="GO:0006355">
    <property type="term" value="P:regulation of DNA-templated transcription"/>
    <property type="evidence" value="ECO:0007669"/>
    <property type="project" value="EnsemblPlants"/>
</dbReference>
<dbReference type="GO" id="GO:0006970">
    <property type="term" value="P:response to osmotic stress"/>
    <property type="evidence" value="ECO:0007669"/>
    <property type="project" value="EnsemblPlants"/>
</dbReference>
<dbReference type="GO" id="GO:0009266">
    <property type="term" value="P:response to temperature stimulus"/>
    <property type="evidence" value="ECO:0007669"/>
    <property type="project" value="EnsemblPlants"/>
</dbReference>
<dbReference type="GO" id="GO:0009845">
    <property type="term" value="P:seed germination"/>
    <property type="evidence" value="ECO:0007669"/>
    <property type="project" value="EnsemblPlants"/>
</dbReference>
<dbReference type="CDD" id="cd10210">
    <property type="entry name" value="ASKHA_NBD_Arp6"/>
    <property type="match status" value="1"/>
</dbReference>
<dbReference type="FunFam" id="2.30.36.70:FF:000006">
    <property type="entry name" value="Actin-related protein 6"/>
    <property type="match status" value="1"/>
</dbReference>
<dbReference type="FunFam" id="3.30.420.40:FF:000187">
    <property type="entry name" value="Actin-related protein 6"/>
    <property type="match status" value="1"/>
</dbReference>
<dbReference type="FunFam" id="3.90.640.10:FF:000041">
    <property type="entry name" value="Actin-related protein 6"/>
    <property type="match status" value="1"/>
</dbReference>
<dbReference type="FunFam" id="3.90.640.10:FF:000057">
    <property type="entry name" value="Actin-related protein 6"/>
    <property type="match status" value="1"/>
</dbReference>
<dbReference type="FunFam" id="3.30.420.40:FF:000048">
    <property type="entry name" value="ARP5 actin-related protein 5 homolog"/>
    <property type="match status" value="1"/>
</dbReference>
<dbReference type="FunFam" id="3.30.420.40:FF:000058">
    <property type="entry name" value="Putative actin-related protein 5"/>
    <property type="match status" value="1"/>
</dbReference>
<dbReference type="Gene3D" id="3.30.420.40">
    <property type="match status" value="4"/>
</dbReference>
<dbReference type="Gene3D" id="2.30.36.70">
    <property type="entry name" value="Actin, Chain A, domain 2"/>
    <property type="match status" value="1"/>
</dbReference>
<dbReference type="Gene3D" id="3.90.640.10">
    <property type="entry name" value="Actin, Chain A, domain 4"/>
    <property type="match status" value="2"/>
</dbReference>
<dbReference type="InterPro" id="IPR004000">
    <property type="entry name" value="Actin"/>
</dbReference>
<dbReference type="InterPro" id="IPR043129">
    <property type="entry name" value="ATPase_NBD"/>
</dbReference>
<dbReference type="PANTHER" id="PTHR11937">
    <property type="entry name" value="ACTIN"/>
    <property type="match status" value="1"/>
</dbReference>
<dbReference type="Pfam" id="PF00022">
    <property type="entry name" value="Actin"/>
    <property type="match status" value="1"/>
</dbReference>
<dbReference type="SMART" id="SM00268">
    <property type="entry name" value="ACTIN"/>
    <property type="match status" value="1"/>
</dbReference>
<dbReference type="SUPFAM" id="SSF53067">
    <property type="entry name" value="Actin-like ATPase domain"/>
    <property type="match status" value="2"/>
</dbReference>
<gene>
    <name type="primary">ARP6</name>
    <name type="ORF">OsI_001303</name>
</gene>
<reference key="1">
    <citation type="journal article" date="2005" name="PLoS Biol.">
        <title>The genomes of Oryza sativa: a history of duplications.</title>
        <authorList>
            <person name="Yu J."/>
            <person name="Wang J."/>
            <person name="Lin W."/>
            <person name="Li S."/>
            <person name="Li H."/>
            <person name="Zhou J."/>
            <person name="Ni P."/>
            <person name="Dong W."/>
            <person name="Hu S."/>
            <person name="Zeng C."/>
            <person name="Zhang J."/>
            <person name="Zhang Y."/>
            <person name="Li R."/>
            <person name="Xu Z."/>
            <person name="Li S."/>
            <person name="Li X."/>
            <person name="Zheng H."/>
            <person name="Cong L."/>
            <person name="Lin L."/>
            <person name="Yin J."/>
            <person name="Geng J."/>
            <person name="Li G."/>
            <person name="Shi J."/>
            <person name="Liu J."/>
            <person name="Lv H."/>
            <person name="Li J."/>
            <person name="Wang J."/>
            <person name="Deng Y."/>
            <person name="Ran L."/>
            <person name="Shi X."/>
            <person name="Wang X."/>
            <person name="Wu Q."/>
            <person name="Li C."/>
            <person name="Ren X."/>
            <person name="Wang J."/>
            <person name="Wang X."/>
            <person name="Li D."/>
            <person name="Liu D."/>
            <person name="Zhang X."/>
            <person name="Ji Z."/>
            <person name="Zhao W."/>
            <person name="Sun Y."/>
            <person name="Zhang Z."/>
            <person name="Bao J."/>
            <person name="Han Y."/>
            <person name="Dong L."/>
            <person name="Ji J."/>
            <person name="Chen P."/>
            <person name="Wu S."/>
            <person name="Liu J."/>
            <person name="Xiao Y."/>
            <person name="Bu D."/>
            <person name="Tan J."/>
            <person name="Yang L."/>
            <person name="Ye C."/>
            <person name="Zhang J."/>
            <person name="Xu J."/>
            <person name="Zhou Y."/>
            <person name="Yu Y."/>
            <person name="Zhang B."/>
            <person name="Zhuang S."/>
            <person name="Wei H."/>
            <person name="Liu B."/>
            <person name="Lei M."/>
            <person name="Yu H."/>
            <person name="Li Y."/>
            <person name="Xu H."/>
            <person name="Wei S."/>
            <person name="He X."/>
            <person name="Fang L."/>
            <person name="Zhang Z."/>
            <person name="Zhang Y."/>
            <person name="Huang X."/>
            <person name="Su Z."/>
            <person name="Tong W."/>
            <person name="Li J."/>
            <person name="Tong Z."/>
            <person name="Li S."/>
            <person name="Ye J."/>
            <person name="Wang L."/>
            <person name="Fang L."/>
            <person name="Lei T."/>
            <person name="Chen C.-S."/>
            <person name="Chen H.-C."/>
            <person name="Xu Z."/>
            <person name="Li H."/>
            <person name="Huang H."/>
            <person name="Zhang F."/>
            <person name="Xu H."/>
            <person name="Li N."/>
            <person name="Zhao C."/>
            <person name="Li S."/>
            <person name="Dong L."/>
            <person name="Huang Y."/>
            <person name="Li L."/>
            <person name="Xi Y."/>
            <person name="Qi Q."/>
            <person name="Li W."/>
            <person name="Zhang B."/>
            <person name="Hu W."/>
            <person name="Zhang Y."/>
            <person name="Tian X."/>
            <person name="Jiao Y."/>
            <person name="Liang X."/>
            <person name="Jin J."/>
            <person name="Gao L."/>
            <person name="Zheng W."/>
            <person name="Hao B."/>
            <person name="Liu S.-M."/>
            <person name="Wang W."/>
            <person name="Yuan L."/>
            <person name="Cao M."/>
            <person name="McDermott J."/>
            <person name="Samudrala R."/>
            <person name="Wang J."/>
            <person name="Wong G.K.-S."/>
            <person name="Yang H."/>
        </authorList>
    </citation>
    <scope>NUCLEOTIDE SEQUENCE [LARGE SCALE GENOMIC DNA]</scope>
    <source>
        <strain>cv. 93-11</strain>
    </source>
</reference>
<reference key="2">
    <citation type="journal article" date="2004" name="Trends Plant Sci.">
        <title>Plant actin-related proteins.</title>
        <authorList>
            <person name="Kandasamy M.K."/>
            <person name="Deal R.B."/>
            <person name="McKinney E.C."/>
            <person name="Meagher R.B."/>
        </authorList>
    </citation>
    <scope>REVIEW</scope>
    <scope>GENE FAMILY</scope>
    <scope>NOMENCLATURE</scope>
</reference>
<organism>
    <name type="scientific">Oryza sativa subsp. indica</name>
    <name type="common">Rice</name>
    <dbReference type="NCBI Taxonomy" id="39946"/>
    <lineage>
        <taxon>Eukaryota</taxon>
        <taxon>Viridiplantae</taxon>
        <taxon>Streptophyta</taxon>
        <taxon>Embryophyta</taxon>
        <taxon>Tracheophyta</taxon>
        <taxon>Spermatophyta</taxon>
        <taxon>Magnoliopsida</taxon>
        <taxon>Liliopsida</taxon>
        <taxon>Poales</taxon>
        <taxon>Poaceae</taxon>
        <taxon>BOP clade</taxon>
        <taxon>Oryzoideae</taxon>
        <taxon>Oryzeae</taxon>
        <taxon>Oryzinae</taxon>
        <taxon>Oryza</taxon>
        <taxon>Oryza sativa</taxon>
    </lineage>
</organism>
<evidence type="ECO:0000250" key="1"/>
<evidence type="ECO:0000250" key="2">
    <source>
        <dbReference type="UniProtKB" id="Q8LGE3"/>
    </source>
</evidence>
<evidence type="ECO:0000256" key="3">
    <source>
        <dbReference type="SAM" id="MobiDB-lite"/>
    </source>
</evidence>
<evidence type="ECO:0000305" key="4"/>
<feature type="chain" id="PRO_0000320537" description="Actin-related protein 6">
    <location>
        <begin position="1"/>
        <end position="429"/>
    </location>
</feature>
<feature type="region of interest" description="Disordered" evidence="3">
    <location>
        <begin position="272"/>
        <end position="293"/>
    </location>
</feature>
<feature type="compositionally biased region" description="Basic and acidic residues" evidence="3">
    <location>
        <begin position="275"/>
        <end position="293"/>
    </location>
</feature>